<comment type="subcellular location">
    <subcellularLocation>
        <location evidence="1">Mitochondrion</location>
    </subcellularLocation>
</comment>
<comment type="similarity">
    <text evidence="4">Belongs to the AIM23 family.</text>
</comment>
<keyword id="KW-0496">Mitochondrion</keyword>
<keyword id="KW-1185">Reference proteome</keyword>
<keyword id="KW-0809">Transit peptide</keyword>
<organism>
    <name type="scientific">Debaryomyces hansenii (strain ATCC 36239 / CBS 767 / BCRC 21394 / JCM 1990 / NBRC 0083 / IGC 2968)</name>
    <name type="common">Yeast</name>
    <name type="synonym">Torulaspora hansenii</name>
    <dbReference type="NCBI Taxonomy" id="284592"/>
    <lineage>
        <taxon>Eukaryota</taxon>
        <taxon>Fungi</taxon>
        <taxon>Dikarya</taxon>
        <taxon>Ascomycota</taxon>
        <taxon>Saccharomycotina</taxon>
        <taxon>Pichiomycetes</taxon>
        <taxon>Debaryomycetaceae</taxon>
        <taxon>Debaryomyces</taxon>
    </lineage>
</organism>
<sequence>MIRITRSYASNLGLRLLSSNSKWNKPFDFTNLNSNKSAEPFDLESLLVRGTSGEGTSKKSSAFSGPEKNAIHNNRFVNMFDKTTQTGNKHVHNNDGSEKFKEFNQKHNNKKHRNQRSHGDRRNHMDTKKSPRKALRFQISTGSDQAQNALKDLISKVHMVSKSYKVKFVNPQNNKLEQKHLVEIVNDLDLAENGLFMVAPSKEGDLPLVKTNKVFEMIKHYTTELATQREKELLEKGSIAAQKAIRQRDRAEKKKSATKILTLSWKISLSDLNNQKKMEIKRRMNKGEKFILYIGDKRSLYSARKSVDKEGGIVENMKDTTAVNEEESEEVVNVNDPSDVDFEIKRRHMIIEELQSILEECECQFDISGHIDSRIMVSCAPPIATTKPNEGNLEENSSKELKKQKKLMKLKKLEEKKQKKTKVEEDLDSLYSFKIED</sequence>
<name>AIM23_DEBHA</name>
<reference key="1">
    <citation type="journal article" date="2004" name="Nature">
        <title>Genome evolution in yeasts.</title>
        <authorList>
            <person name="Dujon B."/>
            <person name="Sherman D."/>
            <person name="Fischer G."/>
            <person name="Durrens P."/>
            <person name="Casaregola S."/>
            <person name="Lafontaine I."/>
            <person name="de Montigny J."/>
            <person name="Marck C."/>
            <person name="Neuveglise C."/>
            <person name="Talla E."/>
            <person name="Goffard N."/>
            <person name="Frangeul L."/>
            <person name="Aigle M."/>
            <person name="Anthouard V."/>
            <person name="Babour A."/>
            <person name="Barbe V."/>
            <person name="Barnay S."/>
            <person name="Blanchin S."/>
            <person name="Beckerich J.-M."/>
            <person name="Beyne E."/>
            <person name="Bleykasten C."/>
            <person name="Boisrame A."/>
            <person name="Boyer J."/>
            <person name="Cattolico L."/>
            <person name="Confanioleri F."/>
            <person name="de Daruvar A."/>
            <person name="Despons L."/>
            <person name="Fabre E."/>
            <person name="Fairhead C."/>
            <person name="Ferry-Dumazet H."/>
            <person name="Groppi A."/>
            <person name="Hantraye F."/>
            <person name="Hennequin C."/>
            <person name="Jauniaux N."/>
            <person name="Joyet P."/>
            <person name="Kachouri R."/>
            <person name="Kerrest A."/>
            <person name="Koszul R."/>
            <person name="Lemaire M."/>
            <person name="Lesur I."/>
            <person name="Ma L."/>
            <person name="Muller H."/>
            <person name="Nicaud J.-M."/>
            <person name="Nikolski M."/>
            <person name="Oztas S."/>
            <person name="Ozier-Kalogeropoulos O."/>
            <person name="Pellenz S."/>
            <person name="Potier S."/>
            <person name="Richard G.-F."/>
            <person name="Straub M.-L."/>
            <person name="Suleau A."/>
            <person name="Swennen D."/>
            <person name="Tekaia F."/>
            <person name="Wesolowski-Louvel M."/>
            <person name="Westhof E."/>
            <person name="Wirth B."/>
            <person name="Zeniou-Meyer M."/>
            <person name="Zivanovic Y."/>
            <person name="Bolotin-Fukuhara M."/>
            <person name="Thierry A."/>
            <person name="Bouchier C."/>
            <person name="Caudron B."/>
            <person name="Scarpelli C."/>
            <person name="Gaillardin C."/>
            <person name="Weissenbach J."/>
            <person name="Wincker P."/>
            <person name="Souciet J.-L."/>
        </authorList>
    </citation>
    <scope>NUCLEOTIDE SEQUENCE [LARGE SCALE GENOMIC DNA]</scope>
    <source>
        <strain>ATCC 36239 / CBS 767 / BCRC 21394 / JCM 1990 / NBRC 0083 / IGC 2968</strain>
    </source>
</reference>
<proteinExistence type="inferred from homology"/>
<evidence type="ECO:0000250" key="1"/>
<evidence type="ECO:0000255" key="2"/>
<evidence type="ECO:0000256" key="3">
    <source>
        <dbReference type="SAM" id="MobiDB-lite"/>
    </source>
</evidence>
<evidence type="ECO:0000305" key="4"/>
<dbReference type="EMBL" id="CR382135">
    <property type="protein sequence ID" value="CAG86207.2"/>
    <property type="molecule type" value="Genomic_DNA"/>
</dbReference>
<dbReference type="RefSeq" id="XP_458136.2">
    <property type="nucleotide sequence ID" value="XM_458136.1"/>
</dbReference>
<dbReference type="SMR" id="Q6BUI3"/>
<dbReference type="FunCoup" id="Q6BUI3">
    <property type="interactions" value="34"/>
</dbReference>
<dbReference type="GeneID" id="2900646"/>
<dbReference type="KEGG" id="dha:DEHA2C10428g"/>
<dbReference type="VEuPathDB" id="FungiDB:DEHA2C10428g"/>
<dbReference type="eggNOG" id="ENOG502RY27">
    <property type="taxonomic scope" value="Eukaryota"/>
</dbReference>
<dbReference type="HOGENOM" id="CLU_054408_0_0_1"/>
<dbReference type="InParanoid" id="Q6BUI3"/>
<dbReference type="OMA" id="KVSWQIS"/>
<dbReference type="OrthoDB" id="3996489at2759"/>
<dbReference type="Proteomes" id="UP000000599">
    <property type="component" value="Chromosome C"/>
</dbReference>
<dbReference type="GO" id="GO:0005739">
    <property type="term" value="C:mitochondrion"/>
    <property type="evidence" value="ECO:0007669"/>
    <property type="project" value="UniProtKB-SubCell"/>
</dbReference>
<dbReference type="InterPro" id="IPR029427">
    <property type="entry name" value="AIM23"/>
</dbReference>
<dbReference type="Pfam" id="PF14877">
    <property type="entry name" value="mIF3"/>
    <property type="match status" value="1"/>
</dbReference>
<gene>
    <name type="primary">AIM23</name>
    <name type="ordered locus">DEHA2C10428g</name>
</gene>
<accession>Q6BUI3</accession>
<protein>
    <recommendedName>
        <fullName>Altered inheritance of mitochondria protein 23, mitochondrial</fullName>
    </recommendedName>
</protein>
<feature type="transit peptide" description="Mitochondrion" evidence="2">
    <location>
        <begin position="1"/>
        <end position="24"/>
    </location>
</feature>
<feature type="chain" id="PRO_0000399535" description="Altered inheritance of mitochondria protein 23, mitochondrial">
    <location>
        <begin position="25"/>
        <end position="437"/>
    </location>
</feature>
<feature type="region of interest" description="Disordered" evidence="3">
    <location>
        <begin position="104"/>
        <end position="132"/>
    </location>
</feature>
<feature type="compositionally biased region" description="Basic residues" evidence="3">
    <location>
        <begin position="107"/>
        <end position="116"/>
    </location>
</feature>
<feature type="compositionally biased region" description="Basic and acidic residues" evidence="3">
    <location>
        <begin position="117"/>
        <end position="129"/>
    </location>
</feature>